<protein>
    <recommendedName>
        <fullName evidence="1">Inorganic pyrophosphatase</fullName>
        <ecNumber evidence="1">3.6.1.1</ecNumber>
    </recommendedName>
    <alternativeName>
        <fullName evidence="1">Pyrophosphate phospho-hydrolase</fullName>
        <shortName evidence="1">PPase</shortName>
    </alternativeName>
</protein>
<reference key="1">
    <citation type="journal article" date="2002" name="Proc. Natl. Acad. Sci. U.S.A.">
        <title>The genome sequence of the facultative intracellular pathogen Brucella melitensis.</title>
        <authorList>
            <person name="DelVecchio V.G."/>
            <person name="Kapatral V."/>
            <person name="Redkar R.J."/>
            <person name="Patra G."/>
            <person name="Mujer C."/>
            <person name="Los T."/>
            <person name="Ivanova N."/>
            <person name="Anderson I."/>
            <person name="Bhattacharyya A."/>
            <person name="Lykidis A."/>
            <person name="Reznik G."/>
            <person name="Jablonski L."/>
            <person name="Larsen N."/>
            <person name="D'Souza M."/>
            <person name="Bernal A."/>
            <person name="Mazur M."/>
            <person name="Goltsman E."/>
            <person name="Selkov E."/>
            <person name="Elzer P.H."/>
            <person name="Hagius S."/>
            <person name="O'Callaghan D."/>
            <person name="Letesson J.-J."/>
            <person name="Haselkorn R."/>
            <person name="Kyrpides N.C."/>
            <person name="Overbeek R."/>
        </authorList>
    </citation>
    <scope>NUCLEOTIDE SEQUENCE [LARGE SCALE GENOMIC DNA]</scope>
    <source>
        <strain>ATCC 23456 / CCUG 17765 / NCTC 10094 / 16M</strain>
    </source>
</reference>
<accession>P65744</accession>
<accession>Q8YJK7</accession>
<name>IPYR_BRUME</name>
<feature type="chain" id="PRO_0000137482" description="Inorganic pyrophosphatase">
    <location>
        <begin position="1"/>
        <end position="176"/>
    </location>
</feature>
<feature type="binding site" evidence="1">
    <location>
        <position position="30"/>
    </location>
    <ligand>
        <name>substrate</name>
    </ligand>
</feature>
<feature type="binding site" evidence="1">
    <location>
        <position position="44"/>
    </location>
    <ligand>
        <name>substrate</name>
    </ligand>
</feature>
<feature type="binding site" evidence="1">
    <location>
        <position position="56"/>
    </location>
    <ligand>
        <name>substrate</name>
    </ligand>
</feature>
<feature type="binding site" evidence="1">
    <location>
        <position position="66"/>
    </location>
    <ligand>
        <name>Mg(2+)</name>
        <dbReference type="ChEBI" id="CHEBI:18420"/>
        <label>1</label>
    </ligand>
</feature>
<feature type="binding site" evidence="1">
    <location>
        <position position="71"/>
    </location>
    <ligand>
        <name>Mg(2+)</name>
        <dbReference type="ChEBI" id="CHEBI:18420"/>
        <label>1</label>
    </ligand>
</feature>
<feature type="binding site" evidence="1">
    <location>
        <position position="71"/>
    </location>
    <ligand>
        <name>Mg(2+)</name>
        <dbReference type="ChEBI" id="CHEBI:18420"/>
        <label>2</label>
    </ligand>
</feature>
<feature type="binding site" evidence="1">
    <location>
        <position position="103"/>
    </location>
    <ligand>
        <name>Mg(2+)</name>
        <dbReference type="ChEBI" id="CHEBI:18420"/>
        <label>1</label>
    </ligand>
</feature>
<feature type="binding site" evidence="1">
    <location>
        <position position="142"/>
    </location>
    <ligand>
        <name>substrate</name>
    </ligand>
</feature>
<organism>
    <name type="scientific">Brucella melitensis biotype 1 (strain ATCC 23456 / CCUG 17765 / NCTC 10094 / 16M)</name>
    <dbReference type="NCBI Taxonomy" id="224914"/>
    <lineage>
        <taxon>Bacteria</taxon>
        <taxon>Pseudomonadati</taxon>
        <taxon>Pseudomonadota</taxon>
        <taxon>Alphaproteobacteria</taxon>
        <taxon>Hyphomicrobiales</taxon>
        <taxon>Brucellaceae</taxon>
        <taxon>Brucella/Ochrobactrum group</taxon>
        <taxon>Brucella</taxon>
    </lineage>
</organism>
<keyword id="KW-0963">Cytoplasm</keyword>
<keyword id="KW-0378">Hydrolase</keyword>
<keyword id="KW-0460">Magnesium</keyword>
<keyword id="KW-0479">Metal-binding</keyword>
<gene>
    <name evidence="1" type="primary">ppa</name>
    <name type="ordered locus">BMEI0076</name>
</gene>
<proteinExistence type="inferred from homology"/>
<sequence length="176" mass="19822">MNIDAISIGSNPPEDVNVIIEVPVGGQPIKYEMDKKAGALIVDRFLYTPMTYPGNYGFVPHTLSEDGDPIDVLVCNTRPLIPGCVINVRPIGVLVMEDNSGKDEKIIAVPSPHLTRRYEKIHDYTDMPEITLKQIAHFFEHYKDLEPGKWVKIGDWGDEDYARKFIVEAIERAKGK</sequence>
<comment type="function">
    <text evidence="1">Catalyzes the hydrolysis of inorganic pyrophosphate (PPi) forming two phosphate ions.</text>
</comment>
<comment type="catalytic activity">
    <reaction evidence="1">
        <text>diphosphate + H2O = 2 phosphate + H(+)</text>
        <dbReference type="Rhea" id="RHEA:24576"/>
        <dbReference type="ChEBI" id="CHEBI:15377"/>
        <dbReference type="ChEBI" id="CHEBI:15378"/>
        <dbReference type="ChEBI" id="CHEBI:33019"/>
        <dbReference type="ChEBI" id="CHEBI:43474"/>
        <dbReference type="EC" id="3.6.1.1"/>
    </reaction>
</comment>
<comment type="cofactor">
    <cofactor evidence="1">
        <name>Mg(2+)</name>
        <dbReference type="ChEBI" id="CHEBI:18420"/>
    </cofactor>
</comment>
<comment type="subunit">
    <text evidence="1">Homohexamer.</text>
</comment>
<comment type="subcellular location">
    <subcellularLocation>
        <location evidence="1">Cytoplasm</location>
    </subcellularLocation>
</comment>
<comment type="similarity">
    <text evidence="1">Belongs to the PPase family.</text>
</comment>
<evidence type="ECO:0000255" key="1">
    <source>
        <dbReference type="HAMAP-Rule" id="MF_00209"/>
    </source>
</evidence>
<dbReference type="EC" id="3.6.1.1" evidence="1"/>
<dbReference type="EMBL" id="AE008917">
    <property type="protein sequence ID" value="AAL51258.1"/>
    <property type="molecule type" value="Genomic_DNA"/>
</dbReference>
<dbReference type="PIR" id="AG3261">
    <property type="entry name" value="AG3261"/>
</dbReference>
<dbReference type="RefSeq" id="WP_002965058.1">
    <property type="nucleotide sequence ID" value="NZ_GG703778.1"/>
</dbReference>
<dbReference type="SMR" id="P65744"/>
<dbReference type="GeneID" id="97534731"/>
<dbReference type="KEGG" id="bme:BMEI0076"/>
<dbReference type="KEGG" id="bmel:DK63_1358"/>
<dbReference type="PATRIC" id="fig|224914.52.peg.1434"/>
<dbReference type="eggNOG" id="COG0221">
    <property type="taxonomic scope" value="Bacteria"/>
</dbReference>
<dbReference type="PhylomeDB" id="P65744"/>
<dbReference type="Proteomes" id="UP000000419">
    <property type="component" value="Chromosome I"/>
</dbReference>
<dbReference type="GO" id="GO:0005737">
    <property type="term" value="C:cytoplasm"/>
    <property type="evidence" value="ECO:0007669"/>
    <property type="project" value="UniProtKB-SubCell"/>
</dbReference>
<dbReference type="GO" id="GO:0004427">
    <property type="term" value="F:inorganic diphosphate phosphatase activity"/>
    <property type="evidence" value="ECO:0007669"/>
    <property type="project" value="UniProtKB-UniRule"/>
</dbReference>
<dbReference type="GO" id="GO:0000287">
    <property type="term" value="F:magnesium ion binding"/>
    <property type="evidence" value="ECO:0007669"/>
    <property type="project" value="UniProtKB-UniRule"/>
</dbReference>
<dbReference type="GO" id="GO:0006796">
    <property type="term" value="P:phosphate-containing compound metabolic process"/>
    <property type="evidence" value="ECO:0007669"/>
    <property type="project" value="InterPro"/>
</dbReference>
<dbReference type="CDD" id="cd00412">
    <property type="entry name" value="pyrophosphatase"/>
    <property type="match status" value="1"/>
</dbReference>
<dbReference type="FunFam" id="3.90.80.10:FF:000003">
    <property type="entry name" value="Inorganic pyrophosphatase"/>
    <property type="match status" value="1"/>
</dbReference>
<dbReference type="Gene3D" id="3.90.80.10">
    <property type="entry name" value="Inorganic pyrophosphatase"/>
    <property type="match status" value="1"/>
</dbReference>
<dbReference type="HAMAP" id="MF_00209">
    <property type="entry name" value="Inorganic_PPase"/>
    <property type="match status" value="1"/>
</dbReference>
<dbReference type="InterPro" id="IPR008162">
    <property type="entry name" value="Pyrophosphatase"/>
</dbReference>
<dbReference type="InterPro" id="IPR036649">
    <property type="entry name" value="Pyrophosphatase_sf"/>
</dbReference>
<dbReference type="NCBIfam" id="NF002317">
    <property type="entry name" value="PRK01250.1"/>
    <property type="match status" value="1"/>
</dbReference>
<dbReference type="PANTHER" id="PTHR10286">
    <property type="entry name" value="INORGANIC PYROPHOSPHATASE"/>
    <property type="match status" value="1"/>
</dbReference>
<dbReference type="Pfam" id="PF00719">
    <property type="entry name" value="Pyrophosphatase"/>
    <property type="match status" value="1"/>
</dbReference>
<dbReference type="SUPFAM" id="SSF50324">
    <property type="entry name" value="Inorganic pyrophosphatase"/>
    <property type="match status" value="1"/>
</dbReference>
<dbReference type="PROSITE" id="PS00387">
    <property type="entry name" value="PPASE"/>
    <property type="match status" value="1"/>
</dbReference>